<gene>
    <name evidence="8" type="ORF">SAM23877_1271</name>
    <name evidence="9" type="ORF">SAML1174</name>
</gene>
<name>LCEMO_STRA7</name>
<keyword id="KW-0119">Carbohydrate metabolism</keyword>
<keyword id="KW-0136">Cellulose degradation</keyword>
<keyword id="KW-0186">Copper</keyword>
<keyword id="KW-0479">Metal-binding</keyword>
<keyword id="KW-0503">Monooxygenase</keyword>
<keyword id="KW-0560">Oxidoreductase</keyword>
<keyword id="KW-0624">Polysaccharide degradation</keyword>
<keyword id="KW-0964">Secreted</keyword>
<keyword id="KW-0732">Signal</keyword>
<organism>
    <name type="scientific">Streptomyces ambofaciens (strain ATCC 23877 / 3486 / DSM 40053 / JCM 4204 / NBRC 12836 / NRRL B-2516)</name>
    <dbReference type="NCBI Taxonomy" id="278992"/>
    <lineage>
        <taxon>Bacteria</taxon>
        <taxon>Bacillati</taxon>
        <taxon>Actinomycetota</taxon>
        <taxon>Actinomycetes</taxon>
        <taxon>Kitasatosporales</taxon>
        <taxon>Streptomycetaceae</taxon>
        <taxon>Streptomyces</taxon>
    </lineage>
</organism>
<reference key="1">
    <citation type="journal article" date="2006" name="Mol. Biol. Evol.">
        <title>Evolution of the terminal regions of the Streptomyces linear chromosome.</title>
        <authorList>
            <person name="Choulet F."/>
            <person name="Aigle B."/>
            <person name="Gallois A."/>
            <person name="Mangenot S."/>
            <person name="Gerbaud C."/>
            <person name="Truong C."/>
            <person name="Francou F.-X."/>
            <person name="Fourrier C."/>
            <person name="Guerineau M."/>
            <person name="Decaris B."/>
            <person name="Barbe V."/>
            <person name="Pernodet J.-L."/>
            <person name="Leblond P."/>
        </authorList>
    </citation>
    <scope>NUCLEOTIDE SEQUENCE [LARGE SCALE GENOMIC DNA]</scope>
    <source>
        <strain>ATCC 23877 / 3486 / DSM 40053 / JCM 4204 / NBRC 12836 / NRRL B-2516</strain>
    </source>
</reference>
<reference key="2">
    <citation type="journal article" date="2015" name="J. Biotechnol.">
        <title>Complete genome sequence of Streptomyces ambofaciens ATCC 23877, the spiramycin producer.</title>
        <authorList>
            <person name="Thibessard A."/>
            <person name="Haas D."/>
            <person name="Gerbaud C."/>
            <person name="Aigle B."/>
            <person name="Lautru S."/>
            <person name="Pernodet J.L."/>
            <person name="Leblond P."/>
        </authorList>
    </citation>
    <scope>NUCLEOTIDE SEQUENCE [LARGE SCALE GENOMIC DNA]</scope>
    <source>
        <strain>ATCC 23877 / 3486 / DSM 40053 / JCM 4204 / NBRC 12836 / NRRL B-2516</strain>
    </source>
</reference>
<reference key="3">
    <citation type="journal article" date="2017" name="Carbohydr. Res.">
        <title>Fast purification method of functional LPMOs from Streptomyces ambofaciens by affinity adsorption.</title>
        <authorList>
            <person name="Valenzuela S.V."/>
            <person name="Ferreres G."/>
            <person name="Margalef G."/>
            <person name="Pastor F.I.J."/>
        </authorList>
    </citation>
    <scope>FUNCTION</scope>
    <scope>CATALYTIC ACTIVITY</scope>
    <scope>COFACTOR</scope>
    <scope>SUBSTRATE SPECIFICITY</scope>
    <scope>PATHWAY</scope>
    <scope>BIOTECHNOLOGY</scope>
</reference>
<protein>
    <recommendedName>
        <fullName evidence="7">Lytic cellulose monooxygenase</fullName>
        <ecNumber evidence="5">1.14.99.54</ecNumber>
    </recommendedName>
    <alternativeName>
        <fullName evidence="6">Lytic polysaccharide monooxygenase</fullName>
        <shortName evidence="6">LPMO</shortName>
    </alternativeName>
    <alternativeName>
        <fullName evidence="6">SamLPMO10C</fullName>
    </alternativeName>
</protein>
<comment type="function">
    <text evidence="5">Involved in the degradation of lignocellulosic biomass. Catalyzes the oxidative cleavage of glycosidic bonds in cellulosic substrates via a copper-dependent mechanism. Degrades phosphoric acid swollen cellulose (PASC) to oxidized cellooligosaccharides with degrees of polymerization of 4-8. Also shows activity on agricultural fiber paper pulps such as flax pulp. Is not active on chitin.</text>
</comment>
<comment type="catalytic activity">
    <reaction evidence="5">
        <text>[(1-&gt;4)-beta-D-glucosyl]n+m + reduced acceptor + O2 = [(1-&gt;4)-beta-D-glucosyl]m-1-(1-&gt;4)-D-glucono-1,5-lactone + [(1-&gt;4)-beta-D-glucosyl]n + acceptor + H2O.</text>
        <dbReference type="EC" id="1.14.99.54"/>
    </reaction>
</comment>
<comment type="cofactor">
    <cofactor evidence="7">
        <name>Cu(2+)</name>
        <dbReference type="ChEBI" id="CHEBI:29036"/>
    </cofactor>
</comment>
<comment type="pathway">
    <text evidence="5">Glycan metabolism; cellulose degradation.</text>
</comment>
<comment type="subcellular location">
    <subcellularLocation>
        <location evidence="7">Secreted</location>
    </subcellularLocation>
</comment>
<comment type="biotechnology">
    <text evidence="7">The purification method developed for LPMOs can be a cheap, simple and fast solution for the purification of these enzymes for industrial applications. In addition, the activity of SamLPMO10C shows the potential of LPMOs in lignocellulosic biomass valorization.</text>
</comment>
<proteinExistence type="evidence at protein level"/>
<feature type="signal peptide" evidence="2">
    <location>
        <begin position="1"/>
        <end position="34"/>
    </location>
</feature>
<feature type="chain" id="PRO_5011202515" description="Lytic cellulose monooxygenase">
    <location>
        <begin position="35"/>
        <end position="364"/>
    </location>
</feature>
<feature type="domain" description="Chitin-binding type-4" evidence="2">
    <location>
        <begin position="35"/>
        <end position="225"/>
    </location>
</feature>
<feature type="domain" description="CBM2" evidence="3">
    <location>
        <begin position="258"/>
        <end position="364"/>
    </location>
</feature>
<feature type="region of interest" description="Disordered" evidence="4">
    <location>
        <begin position="234"/>
        <end position="261"/>
    </location>
</feature>
<feature type="compositionally biased region" description="Pro residues" evidence="4">
    <location>
        <begin position="245"/>
        <end position="260"/>
    </location>
</feature>
<feature type="binding site" evidence="1">
    <location>
        <position position="35"/>
    </location>
    <ligand>
        <name>Cu cation</name>
        <dbReference type="ChEBI" id="CHEBI:23378"/>
    </ligand>
</feature>
<feature type="binding site" evidence="1">
    <location>
        <position position="144"/>
    </location>
    <ligand>
        <name>Cu cation</name>
        <dbReference type="ChEBI" id="CHEBI:23378"/>
    </ligand>
</feature>
<accession>A3KKC4</accession>
<evidence type="ECO:0000250" key="1">
    <source>
        <dbReference type="UniProtKB" id="Q838S1"/>
    </source>
</evidence>
<evidence type="ECO:0000255" key="2"/>
<evidence type="ECO:0000255" key="3">
    <source>
        <dbReference type="PROSITE-ProRule" id="PRU01135"/>
    </source>
</evidence>
<evidence type="ECO:0000256" key="4">
    <source>
        <dbReference type="SAM" id="MobiDB-lite"/>
    </source>
</evidence>
<evidence type="ECO:0000269" key="5">
    <source>
    </source>
</evidence>
<evidence type="ECO:0000303" key="6">
    <source>
    </source>
</evidence>
<evidence type="ECO:0000305" key="7">
    <source>
    </source>
</evidence>
<evidence type="ECO:0000312" key="8">
    <source>
        <dbReference type="EMBL" id="AKZ54320.1"/>
    </source>
</evidence>
<evidence type="ECO:0000312" key="9">
    <source>
        <dbReference type="EMBL" id="CAJ90160.1"/>
    </source>
</evidence>
<dbReference type="EC" id="1.14.99.54" evidence="5"/>
<dbReference type="EMBL" id="AM238663">
    <property type="protein sequence ID" value="CAJ90160.1"/>
    <property type="molecule type" value="Genomic_DNA"/>
</dbReference>
<dbReference type="EMBL" id="CP012382">
    <property type="protein sequence ID" value="AKZ54320.1"/>
    <property type="molecule type" value="Genomic_DNA"/>
</dbReference>
<dbReference type="RefSeq" id="WP_053127554.1">
    <property type="nucleotide sequence ID" value="NZ_CP012382.1"/>
</dbReference>
<dbReference type="SMR" id="A3KKC4"/>
<dbReference type="STRING" id="1889.SAM40697_1112"/>
<dbReference type="CAZy" id="AA10">
    <property type="family name" value="Auxiliary Activities 10"/>
</dbReference>
<dbReference type="CAZy" id="CBM2">
    <property type="family name" value="Carbohydrate-Binding Module Family 2"/>
</dbReference>
<dbReference type="KEGG" id="samb:SAM23877_1271"/>
<dbReference type="UniPathway" id="UPA00696"/>
<dbReference type="Proteomes" id="UP000061018">
    <property type="component" value="Chromosome"/>
</dbReference>
<dbReference type="GO" id="GO:0005576">
    <property type="term" value="C:extracellular region"/>
    <property type="evidence" value="ECO:0007669"/>
    <property type="project" value="UniProtKB-SubCell"/>
</dbReference>
<dbReference type="GO" id="GO:0030248">
    <property type="term" value="F:cellulose binding"/>
    <property type="evidence" value="ECO:0000314"/>
    <property type="project" value="UniProtKB"/>
</dbReference>
<dbReference type="GO" id="GO:0005507">
    <property type="term" value="F:copper ion binding"/>
    <property type="evidence" value="ECO:0000250"/>
    <property type="project" value="UniProtKB"/>
</dbReference>
<dbReference type="GO" id="GO:0004553">
    <property type="term" value="F:hydrolase activity, hydrolyzing O-glycosyl compounds"/>
    <property type="evidence" value="ECO:0007669"/>
    <property type="project" value="InterPro"/>
</dbReference>
<dbReference type="GO" id="GO:0004497">
    <property type="term" value="F:monooxygenase activity"/>
    <property type="evidence" value="ECO:0000314"/>
    <property type="project" value="UniProtKB"/>
</dbReference>
<dbReference type="GO" id="GO:0030245">
    <property type="term" value="P:cellulose catabolic process"/>
    <property type="evidence" value="ECO:0000314"/>
    <property type="project" value="UniProtKB"/>
</dbReference>
<dbReference type="CDD" id="cd21177">
    <property type="entry name" value="LPMO_AA10"/>
    <property type="match status" value="1"/>
</dbReference>
<dbReference type="FunFam" id="2.70.50.50:FF:000003">
    <property type="entry name" value="Secreted cellulose binding protein"/>
    <property type="match status" value="1"/>
</dbReference>
<dbReference type="Gene3D" id="2.60.40.290">
    <property type="match status" value="1"/>
</dbReference>
<dbReference type="Gene3D" id="2.70.50.50">
    <property type="entry name" value="chitin-binding protein cbp21"/>
    <property type="match status" value="1"/>
</dbReference>
<dbReference type="InterPro" id="IPR001919">
    <property type="entry name" value="CBD2"/>
</dbReference>
<dbReference type="InterPro" id="IPR008965">
    <property type="entry name" value="CBM2/CBM3_carb-bd_dom_sf"/>
</dbReference>
<dbReference type="InterPro" id="IPR012291">
    <property type="entry name" value="CBM2_carb-bd_dom_sf"/>
</dbReference>
<dbReference type="InterPro" id="IPR004302">
    <property type="entry name" value="Cellulose/chitin-bd_N"/>
</dbReference>
<dbReference type="InterPro" id="IPR051024">
    <property type="entry name" value="GlcNAc_Chitin_IntDeg"/>
</dbReference>
<dbReference type="InterPro" id="IPR014756">
    <property type="entry name" value="Ig_E-set"/>
</dbReference>
<dbReference type="PANTHER" id="PTHR34823:SF1">
    <property type="entry name" value="CHITIN-BINDING TYPE-4 DOMAIN-CONTAINING PROTEIN"/>
    <property type="match status" value="1"/>
</dbReference>
<dbReference type="PANTHER" id="PTHR34823">
    <property type="entry name" value="GLCNAC-BINDING PROTEIN A"/>
    <property type="match status" value="1"/>
</dbReference>
<dbReference type="Pfam" id="PF00553">
    <property type="entry name" value="CBM_2"/>
    <property type="match status" value="1"/>
</dbReference>
<dbReference type="Pfam" id="PF03067">
    <property type="entry name" value="LPMO_10"/>
    <property type="match status" value="1"/>
</dbReference>
<dbReference type="SMART" id="SM00637">
    <property type="entry name" value="CBD_II"/>
    <property type="match status" value="1"/>
</dbReference>
<dbReference type="SUPFAM" id="SSF49384">
    <property type="entry name" value="Carbohydrate-binding domain"/>
    <property type="match status" value="1"/>
</dbReference>
<dbReference type="SUPFAM" id="SSF81296">
    <property type="entry name" value="E set domains"/>
    <property type="match status" value="1"/>
</dbReference>
<dbReference type="PROSITE" id="PS51173">
    <property type="entry name" value="CBM2"/>
    <property type="match status" value="1"/>
</dbReference>
<sequence>MARRSRYISLAAVMATLLSALGVTFLLGQGRAEAHGVAMMPGSRTYLCQLDAKTGTGALDPTNPACRSALDTSGATALYNWFAVLDSNAGGRGAGYVPDGTLCSAGNRSPYDFRGYNAARSDWPRTHLTSGSTIQVNYSNWAAHPGDFRVYLTKPGWSPTSELGWDDLELIETVTDPPQRGSAGADGGHYYWDLALPSGRSGDALIFMQWVRSDSQENFFSCSDVVFDGGNGEVTGIRGSGGTPTPTPTPTTPPTTPPPTHSGSCMAVYNVENSWSGGFQGSVEVMNHGTEPLNGWAVQWKPGNGTTLGGVWNGSPTRGTDGTVKVRNVDHNRVVPPDGSVTFGFTATSTGNDFPVGTIGCVAP</sequence>